<name>AOC2_MOUSE</name>
<evidence type="ECO:0000250" key="1"/>
<evidence type="ECO:0000250" key="2">
    <source>
        <dbReference type="UniProtKB" id="O75106"/>
    </source>
</evidence>
<evidence type="ECO:0000250" key="3">
    <source>
        <dbReference type="UniProtKB" id="P19801"/>
    </source>
</evidence>
<evidence type="ECO:0000250" key="4">
    <source>
        <dbReference type="UniProtKB" id="Q16853"/>
    </source>
</evidence>
<evidence type="ECO:0000255" key="5"/>
<evidence type="ECO:0000269" key="6">
    <source>
    </source>
</evidence>
<evidence type="ECO:0000303" key="7">
    <source>
    </source>
</evidence>
<evidence type="ECO:0000305" key="8"/>
<evidence type="ECO:0000312" key="9">
    <source>
        <dbReference type="MGI" id="MGI:2668431"/>
    </source>
</evidence>
<comment type="function">
    <text evidence="2">Catalyzes the oxidative deamination of primary amines to the corresponding aldehydes with the concomitant production of hydrogen peroxide and ammonia. Has a preference for 2-phenylethylamine, tryptamine and tyramine. Could also act on methylamine and benzylamine but much less efficiently.</text>
</comment>
<comment type="catalytic activity">
    <reaction evidence="2">
        <text>2-phenylethylamine + O2 + H2O = 2-phenylacetaldehyde + H2O2 + NH4(+)</text>
        <dbReference type="Rhea" id="RHEA:25265"/>
        <dbReference type="ChEBI" id="CHEBI:15377"/>
        <dbReference type="ChEBI" id="CHEBI:15379"/>
        <dbReference type="ChEBI" id="CHEBI:16240"/>
        <dbReference type="ChEBI" id="CHEBI:16424"/>
        <dbReference type="ChEBI" id="CHEBI:28938"/>
        <dbReference type="ChEBI" id="CHEBI:225237"/>
        <dbReference type="EC" id="1.4.3.21"/>
    </reaction>
    <physiologicalReaction direction="left-to-right" evidence="2">
        <dbReference type="Rhea" id="RHEA:25266"/>
    </physiologicalReaction>
</comment>
<comment type="catalytic activity">
    <reaction evidence="2">
        <text>tryptamine + O2 + H2O = indole-3-acetaldehyde + H2O2 + NH4(+)</text>
        <dbReference type="Rhea" id="RHEA:59416"/>
        <dbReference type="ChEBI" id="CHEBI:15377"/>
        <dbReference type="ChEBI" id="CHEBI:15379"/>
        <dbReference type="ChEBI" id="CHEBI:16240"/>
        <dbReference type="ChEBI" id="CHEBI:18086"/>
        <dbReference type="ChEBI" id="CHEBI:28938"/>
        <dbReference type="ChEBI" id="CHEBI:57887"/>
    </reaction>
    <physiologicalReaction direction="left-to-right" evidence="2">
        <dbReference type="Rhea" id="RHEA:59417"/>
    </physiologicalReaction>
</comment>
<comment type="catalytic activity">
    <reaction evidence="2">
        <text>tyramine + O2 + H2O = (4-hydroxyphenyl)acetaldehyde + H2O2 + NH4(+)</text>
        <dbReference type="Rhea" id="RHEA:30591"/>
        <dbReference type="ChEBI" id="CHEBI:15377"/>
        <dbReference type="ChEBI" id="CHEBI:15379"/>
        <dbReference type="ChEBI" id="CHEBI:15621"/>
        <dbReference type="ChEBI" id="CHEBI:16240"/>
        <dbReference type="ChEBI" id="CHEBI:28938"/>
        <dbReference type="ChEBI" id="CHEBI:327995"/>
    </reaction>
    <physiologicalReaction direction="left-to-right" evidence="2">
        <dbReference type="Rhea" id="RHEA:30592"/>
    </physiologicalReaction>
</comment>
<comment type="cofactor">
    <cofactor evidence="4">
        <name>Cu(2+)</name>
        <dbReference type="ChEBI" id="CHEBI:29036"/>
    </cofactor>
    <text evidence="4">Binds 1 copper ion per subunit.</text>
</comment>
<comment type="cofactor">
    <cofactor evidence="4">
        <name>Ca(2+)</name>
        <dbReference type="ChEBI" id="CHEBI:29108"/>
    </cofactor>
    <text evidence="4">Binds 2 calcium ions per subunit.</text>
</comment>
<comment type="cofactor">
    <cofactor evidence="4">
        <name>L-topaquinone</name>
        <dbReference type="ChEBI" id="CHEBI:79027"/>
    </cofactor>
    <text evidence="4">Contains 1 topaquinone per subunit.</text>
</comment>
<comment type="subunit">
    <text evidence="2">Homodimer; disulfide-linked. Probably forms heterodimers with AOC3.</text>
</comment>
<comment type="subcellular location">
    <subcellularLocation>
        <location evidence="2">Cell membrane</location>
        <topology evidence="4">Single-pass type II membrane protein</topology>
    </subcellularLocation>
</comment>
<comment type="tissue specificity">
    <text evidence="6">Significantly much highly expressed in retina.</text>
</comment>
<comment type="PTM">
    <text evidence="4">Topaquinone (TPQ) is generated by copper-dependent autoxidation of a specific tyrosyl residue.</text>
</comment>
<comment type="similarity">
    <text evidence="8">Belongs to the copper/topaquinone oxidase family.</text>
</comment>
<reference key="1">
    <citation type="journal article" date="2003" name="Gene">
        <title>Characterization of AOC2 gene encoding a copper-binding amine oxidase expressed specifically in retina.</title>
        <authorList>
            <person name="Zhang Q."/>
            <person name="Mashima Y."/>
            <person name="Noda S."/>
            <person name="Imamura Y."/>
            <person name="Kudoh J."/>
            <person name="Shimizu N."/>
            <person name="Nishiyama T."/>
            <person name="Umeda S."/>
            <person name="Oguchi Y."/>
            <person name="Tanaka Y."/>
            <person name="Iwata T."/>
        </authorList>
    </citation>
    <scope>NUCLEOTIDE SEQUENCE [GENOMIC DNA / MRNA]</scope>
    <scope>TISSUE SPECIFICITY</scope>
</reference>
<reference key="2">
    <citation type="journal article" date="2009" name="PLoS Biol.">
        <title>Lineage-specific biology revealed by a finished genome assembly of the mouse.</title>
        <authorList>
            <person name="Church D.M."/>
            <person name="Goodstadt L."/>
            <person name="Hillier L.W."/>
            <person name="Zody M.C."/>
            <person name="Goldstein S."/>
            <person name="She X."/>
            <person name="Bult C.J."/>
            <person name="Agarwala R."/>
            <person name="Cherry J.L."/>
            <person name="DiCuccio M."/>
            <person name="Hlavina W."/>
            <person name="Kapustin Y."/>
            <person name="Meric P."/>
            <person name="Maglott D."/>
            <person name="Birtle Z."/>
            <person name="Marques A.C."/>
            <person name="Graves T."/>
            <person name="Zhou S."/>
            <person name="Teague B."/>
            <person name="Potamousis K."/>
            <person name="Churas C."/>
            <person name="Place M."/>
            <person name="Herschleb J."/>
            <person name="Runnheim R."/>
            <person name="Forrest D."/>
            <person name="Amos-Landgraf J."/>
            <person name="Schwartz D.C."/>
            <person name="Cheng Z."/>
            <person name="Lindblad-Toh K."/>
            <person name="Eichler E.E."/>
            <person name="Ponting C.P."/>
        </authorList>
    </citation>
    <scope>NUCLEOTIDE SEQUENCE [LARGE SCALE GENOMIC DNA]</scope>
    <source>
        <strain>C57BL/6J</strain>
    </source>
</reference>
<reference key="3">
    <citation type="journal article" date="2004" name="Genome Res.">
        <title>The status, quality, and expansion of the NIH full-length cDNA project: the Mammalian Gene Collection (MGC).</title>
        <authorList>
            <consortium name="The MGC Project Team"/>
        </authorList>
    </citation>
    <scope>NUCLEOTIDE SEQUENCE [LARGE SCALE MRNA]</scope>
    <source>
        <tissue>Brain</tissue>
    </source>
</reference>
<feature type="chain" id="PRO_0000035672" description="Amine oxidase [copper-containing] 2" evidence="1">
    <location>
        <begin position="1"/>
        <end position="757"/>
    </location>
</feature>
<feature type="topological domain" description="Cytoplasmic" evidence="4">
    <location>
        <begin position="1"/>
        <end position="4"/>
    </location>
</feature>
<feature type="transmembrane region" description="Helical" evidence="5">
    <location>
        <begin position="5"/>
        <end position="25"/>
    </location>
</feature>
<feature type="topological domain" description="Extracellular" evidence="4">
    <location>
        <begin position="26"/>
        <end position="757"/>
    </location>
</feature>
<feature type="active site" description="Proton acceptor" evidence="3">
    <location>
        <position position="381"/>
    </location>
</feature>
<feature type="active site" description="Schiff-base intermediate with substrate; via topaquinone" evidence="4">
    <location>
        <position position="466"/>
    </location>
</feature>
<feature type="binding site" evidence="4">
    <location>
        <position position="517"/>
    </location>
    <ligand>
        <name>Cu(2+)</name>
        <dbReference type="ChEBI" id="CHEBI:29036"/>
    </ligand>
</feature>
<feature type="binding site" evidence="4">
    <location>
        <position position="519"/>
    </location>
    <ligand>
        <name>Cu(2+)</name>
        <dbReference type="ChEBI" id="CHEBI:29036"/>
    </ligand>
</feature>
<feature type="binding site" evidence="4">
    <location>
        <position position="526"/>
    </location>
    <ligand>
        <name>Ca(2+)</name>
        <dbReference type="ChEBI" id="CHEBI:29108"/>
        <label>1</label>
    </ligand>
</feature>
<feature type="binding site" evidence="4">
    <location>
        <position position="527"/>
    </location>
    <ligand>
        <name>Ca(2+)</name>
        <dbReference type="ChEBI" id="CHEBI:29108"/>
        <label>1</label>
    </ligand>
</feature>
<feature type="binding site" evidence="4">
    <location>
        <position position="528"/>
    </location>
    <ligand>
        <name>Ca(2+)</name>
        <dbReference type="ChEBI" id="CHEBI:29108"/>
        <label>1</label>
    </ligand>
</feature>
<feature type="binding site" evidence="4">
    <location>
        <position position="569"/>
    </location>
    <ligand>
        <name>Ca(2+)</name>
        <dbReference type="ChEBI" id="CHEBI:29108"/>
        <label>2</label>
    </ligand>
</feature>
<feature type="binding site" evidence="4">
    <location>
        <position position="638"/>
    </location>
    <ligand>
        <name>Ca(2+)</name>
        <dbReference type="ChEBI" id="CHEBI:29108"/>
        <label>2</label>
    </ligand>
</feature>
<feature type="binding site" evidence="4">
    <location>
        <position position="660"/>
    </location>
    <ligand>
        <name>Ca(2+)</name>
        <dbReference type="ChEBI" id="CHEBI:29108"/>
        <label>2</label>
    </ligand>
</feature>
<feature type="binding site" evidence="4">
    <location>
        <position position="662"/>
    </location>
    <ligand>
        <name>Ca(2+)</name>
        <dbReference type="ChEBI" id="CHEBI:29108"/>
        <label>2</label>
    </ligand>
</feature>
<feature type="binding site" evidence="4">
    <location>
        <position position="664"/>
    </location>
    <ligand>
        <name>Ca(2+)</name>
        <dbReference type="ChEBI" id="CHEBI:29108"/>
        <label>2</label>
    </ligand>
</feature>
<feature type="binding site" evidence="4">
    <location>
        <position position="670"/>
    </location>
    <ligand>
        <name>Ca(2+)</name>
        <dbReference type="ChEBI" id="CHEBI:29108"/>
        <label>1</label>
    </ligand>
</feature>
<feature type="binding site" evidence="4">
    <location>
        <position position="671"/>
    </location>
    <ligand>
        <name>Ca(2+)</name>
        <dbReference type="ChEBI" id="CHEBI:29108"/>
        <label>1</label>
    </ligand>
</feature>
<feature type="binding site" evidence="4">
    <location>
        <position position="681"/>
    </location>
    <ligand>
        <name>Cu(2+)</name>
        <dbReference type="ChEBI" id="CHEBI:29036"/>
    </ligand>
</feature>
<feature type="modified residue" description="2',4',5'-topaquinone" evidence="4">
    <location>
        <position position="466"/>
    </location>
</feature>
<feature type="glycosylation site" description="N-linked (GlcNAc...) asparagine" evidence="5">
    <location>
        <position position="133"/>
    </location>
</feature>
<feature type="glycosylation site" description="N-linked (GlcNAc...) asparagine" evidence="5">
    <location>
        <position position="198"/>
    </location>
</feature>
<feature type="glycosylation site" description="N-linked (GlcNAc...) asparagine" evidence="5">
    <location>
        <position position="226"/>
    </location>
</feature>
<feature type="glycosylation site" description="N-linked (GlcNAc...) asparagine" evidence="5">
    <location>
        <position position="663"/>
    </location>
</feature>
<feature type="disulfide bond" evidence="4">
    <location>
        <begin position="399"/>
        <end position="425"/>
    </location>
</feature>
<feature type="disulfide bond" evidence="4">
    <location>
        <begin position="731"/>
        <end position="738"/>
    </location>
</feature>
<feature type="disulfide bond" description="Interchain" evidence="4">
    <location>
        <position position="745"/>
    </location>
</feature>
<feature type="sequence conflict" description="In Ref. 1; AAK58865." evidence="8" ref="1">
    <original>S</original>
    <variation>N</variation>
    <location>
        <position position="53"/>
    </location>
</feature>
<feature type="sequence conflict" description="In Ref. 1; AAK58865." evidence="8" ref="1">
    <original>V</original>
    <variation>A</variation>
    <location>
        <position position="117"/>
    </location>
</feature>
<keyword id="KW-0106">Calcium</keyword>
<keyword id="KW-0128">Catecholamine metabolism</keyword>
<keyword id="KW-1003">Cell membrane</keyword>
<keyword id="KW-0186">Copper</keyword>
<keyword id="KW-1015">Disulfide bond</keyword>
<keyword id="KW-0325">Glycoprotein</keyword>
<keyword id="KW-0472">Membrane</keyword>
<keyword id="KW-0479">Metal-binding</keyword>
<keyword id="KW-0560">Oxidoreductase</keyword>
<keyword id="KW-1185">Reference proteome</keyword>
<keyword id="KW-0735">Signal-anchor</keyword>
<keyword id="KW-0801">TPQ</keyword>
<keyword id="KW-0812">Transmembrane</keyword>
<keyword id="KW-1133">Transmembrane helix</keyword>
<organism>
    <name type="scientific">Mus musculus</name>
    <name type="common">Mouse</name>
    <dbReference type="NCBI Taxonomy" id="10090"/>
    <lineage>
        <taxon>Eukaryota</taxon>
        <taxon>Metazoa</taxon>
        <taxon>Chordata</taxon>
        <taxon>Craniata</taxon>
        <taxon>Vertebrata</taxon>
        <taxon>Euteleostomi</taxon>
        <taxon>Mammalia</taxon>
        <taxon>Eutheria</taxon>
        <taxon>Euarchontoglires</taxon>
        <taxon>Glires</taxon>
        <taxon>Rodentia</taxon>
        <taxon>Myomorpha</taxon>
        <taxon>Muroidea</taxon>
        <taxon>Muridae</taxon>
        <taxon>Murinae</taxon>
        <taxon>Mus</taxon>
        <taxon>Mus</taxon>
    </lineage>
</organism>
<dbReference type="EC" id="1.4.3.21" evidence="2"/>
<dbReference type="EMBL" id="AF350445">
    <property type="protein sequence ID" value="AAK58864.2"/>
    <property type="molecule type" value="mRNA"/>
</dbReference>
<dbReference type="EMBL" id="AF350446">
    <property type="protein sequence ID" value="AAK58865.1"/>
    <property type="molecule type" value="Genomic_DNA"/>
</dbReference>
<dbReference type="EMBL" id="AL590969">
    <property type="status" value="NOT_ANNOTATED_CDS"/>
    <property type="molecule type" value="Genomic_DNA"/>
</dbReference>
<dbReference type="EMBL" id="BC150843">
    <property type="protein sequence ID" value="AAI50844.1"/>
    <property type="molecule type" value="mRNA"/>
</dbReference>
<dbReference type="EMBL" id="BC150848">
    <property type="protein sequence ID" value="AAI50849.1"/>
    <property type="molecule type" value="mRNA"/>
</dbReference>
<dbReference type="CCDS" id="CCDS25464.1"/>
<dbReference type="RefSeq" id="NP_849263.1">
    <property type="nucleotide sequence ID" value="NM_178932.1"/>
</dbReference>
<dbReference type="SMR" id="Q812C9"/>
<dbReference type="FunCoup" id="Q812C9">
    <property type="interactions" value="224"/>
</dbReference>
<dbReference type="STRING" id="10090.ENSMUSP00000040255"/>
<dbReference type="GlyConnect" id="2684">
    <property type="glycosylation" value="2 N-Linked glycans (1 site)"/>
</dbReference>
<dbReference type="GlyCosmos" id="Q812C9">
    <property type="glycosylation" value="5 sites, 2 glycans"/>
</dbReference>
<dbReference type="GlyGen" id="Q812C9">
    <property type="glycosylation" value="6 sites, 2 N-linked glycans (1 site)"/>
</dbReference>
<dbReference type="iPTMnet" id="Q812C9"/>
<dbReference type="PhosphoSitePlus" id="Q812C9"/>
<dbReference type="PaxDb" id="10090-ENSMUSP00000040255"/>
<dbReference type="ProteomicsDB" id="296320"/>
<dbReference type="Antibodypedia" id="17156">
    <property type="antibodies" value="81 antibodies from 16 providers"/>
</dbReference>
<dbReference type="DNASU" id="237940"/>
<dbReference type="Ensembl" id="ENSMUST00000041095.14">
    <property type="protein sequence ID" value="ENSMUSP00000040255.8"/>
    <property type="gene ID" value="ENSMUSG00000078651.9"/>
</dbReference>
<dbReference type="GeneID" id="237940"/>
<dbReference type="KEGG" id="mmu:237940"/>
<dbReference type="UCSC" id="uc007loo.1">
    <property type="organism name" value="mouse"/>
</dbReference>
<dbReference type="AGR" id="MGI:2668431"/>
<dbReference type="CTD" id="314"/>
<dbReference type="MGI" id="MGI:2668431">
    <property type="gene designation" value="Aoc2"/>
</dbReference>
<dbReference type="VEuPathDB" id="HostDB:ENSMUSG00000078651"/>
<dbReference type="eggNOG" id="KOG1186">
    <property type="taxonomic scope" value="Eukaryota"/>
</dbReference>
<dbReference type="GeneTree" id="ENSGT00950000183207"/>
<dbReference type="InParanoid" id="Q812C9"/>
<dbReference type="OMA" id="HFTRAED"/>
<dbReference type="OrthoDB" id="5379943at2759"/>
<dbReference type="PhylomeDB" id="Q812C9"/>
<dbReference type="TreeFam" id="TF314750"/>
<dbReference type="Reactome" id="R-MMU-211945">
    <property type="pathway name" value="Phase I - Functionalization of compounds"/>
</dbReference>
<dbReference type="BioGRID-ORCS" id="237940">
    <property type="hits" value="4 hits in 76 CRISPR screens"/>
</dbReference>
<dbReference type="ChiTaRS" id="Aoc2">
    <property type="organism name" value="mouse"/>
</dbReference>
<dbReference type="PRO" id="PR:Q812C9"/>
<dbReference type="Proteomes" id="UP000000589">
    <property type="component" value="Chromosome 11"/>
</dbReference>
<dbReference type="RNAct" id="Q812C9">
    <property type="molecule type" value="protein"/>
</dbReference>
<dbReference type="Bgee" id="ENSMUSG00000078651">
    <property type="expression patterns" value="Expressed in bone marrow and 58 other cell types or tissues"/>
</dbReference>
<dbReference type="ExpressionAtlas" id="Q812C9">
    <property type="expression patterns" value="baseline and differential"/>
</dbReference>
<dbReference type="GO" id="GO:0005886">
    <property type="term" value="C:plasma membrane"/>
    <property type="evidence" value="ECO:0007669"/>
    <property type="project" value="UniProtKB-SubCell"/>
</dbReference>
<dbReference type="GO" id="GO:0005507">
    <property type="term" value="F:copper ion binding"/>
    <property type="evidence" value="ECO:0007669"/>
    <property type="project" value="InterPro"/>
</dbReference>
<dbReference type="GO" id="GO:0008131">
    <property type="term" value="F:primary methylamine oxidase activity"/>
    <property type="evidence" value="ECO:0007669"/>
    <property type="project" value="UniProtKB-EC"/>
</dbReference>
<dbReference type="GO" id="GO:0048038">
    <property type="term" value="F:quinone binding"/>
    <property type="evidence" value="ECO:0007669"/>
    <property type="project" value="InterPro"/>
</dbReference>
<dbReference type="GO" id="GO:0006584">
    <property type="term" value="P:catecholamine metabolic process"/>
    <property type="evidence" value="ECO:0007669"/>
    <property type="project" value="UniProtKB-KW"/>
</dbReference>
<dbReference type="FunFam" id="2.70.98.20:FF:000005">
    <property type="entry name" value="Amine oxidase"/>
    <property type="match status" value="1"/>
</dbReference>
<dbReference type="FunFam" id="3.10.450.40:FF:000001">
    <property type="entry name" value="Amine oxidase"/>
    <property type="match status" value="1"/>
</dbReference>
<dbReference type="FunFam" id="3.10.450.40:FF:000003">
    <property type="entry name" value="Amine oxidase"/>
    <property type="match status" value="1"/>
</dbReference>
<dbReference type="Gene3D" id="3.10.450.40">
    <property type="match status" value="2"/>
</dbReference>
<dbReference type="Gene3D" id="2.70.98.20">
    <property type="entry name" value="Copper amine oxidase, catalytic domain"/>
    <property type="match status" value="1"/>
</dbReference>
<dbReference type="InterPro" id="IPR049947">
    <property type="entry name" value="Cu_Am_Ox_Cu-bd"/>
</dbReference>
<dbReference type="InterPro" id="IPR049948">
    <property type="entry name" value="Cu_Am_ox_TPQ-bd"/>
</dbReference>
<dbReference type="InterPro" id="IPR000269">
    <property type="entry name" value="Cu_amine_oxidase"/>
</dbReference>
<dbReference type="InterPro" id="IPR015798">
    <property type="entry name" value="Cu_amine_oxidase_C"/>
</dbReference>
<dbReference type="InterPro" id="IPR036460">
    <property type="entry name" value="Cu_amine_oxidase_C_sf"/>
</dbReference>
<dbReference type="InterPro" id="IPR016182">
    <property type="entry name" value="Cu_amine_oxidase_N-reg"/>
</dbReference>
<dbReference type="InterPro" id="IPR015800">
    <property type="entry name" value="Cu_amine_oxidase_N2"/>
</dbReference>
<dbReference type="InterPro" id="IPR015802">
    <property type="entry name" value="Cu_amine_oxidase_N3"/>
</dbReference>
<dbReference type="PANTHER" id="PTHR10638">
    <property type="entry name" value="COPPER AMINE OXIDASE"/>
    <property type="match status" value="1"/>
</dbReference>
<dbReference type="PANTHER" id="PTHR10638:SF4">
    <property type="entry name" value="RETINA-SPECIFIC COPPER AMINE OXIDASE"/>
    <property type="match status" value="1"/>
</dbReference>
<dbReference type="Pfam" id="PF01179">
    <property type="entry name" value="Cu_amine_oxid"/>
    <property type="match status" value="1"/>
</dbReference>
<dbReference type="Pfam" id="PF02727">
    <property type="entry name" value="Cu_amine_oxidN2"/>
    <property type="match status" value="1"/>
</dbReference>
<dbReference type="Pfam" id="PF02728">
    <property type="entry name" value="Cu_amine_oxidN3"/>
    <property type="match status" value="1"/>
</dbReference>
<dbReference type="PRINTS" id="PR00766">
    <property type="entry name" value="CUDAOXIDASE"/>
</dbReference>
<dbReference type="SUPFAM" id="SSF49998">
    <property type="entry name" value="Amine oxidase catalytic domain"/>
    <property type="match status" value="1"/>
</dbReference>
<dbReference type="SUPFAM" id="SSF54416">
    <property type="entry name" value="Amine oxidase N-terminal region"/>
    <property type="match status" value="2"/>
</dbReference>
<dbReference type="PROSITE" id="PS01164">
    <property type="entry name" value="COPPER_AMINE_OXID_1"/>
    <property type="match status" value="1"/>
</dbReference>
<dbReference type="PROSITE" id="PS01165">
    <property type="entry name" value="COPPER_AMINE_OXID_2"/>
    <property type="match status" value="1"/>
</dbReference>
<protein>
    <recommendedName>
        <fullName evidence="2">Amine oxidase [copper-containing] 2</fullName>
        <ecNumber evidence="2">1.4.3.21</ecNumber>
    </recommendedName>
    <alternativeName>
        <fullName evidence="9">Amine oxidase copper-containing 2</fullName>
    </alternativeName>
    <alternativeName>
        <fullName evidence="7">Retina-specific copper amine oxidase</fullName>
        <shortName evidence="7">RAO</shortName>
    </alternativeName>
</protein>
<proteinExistence type="evidence at transcript level"/>
<gene>
    <name evidence="9" type="primary">Aoc2</name>
</gene>
<sequence>MNLKVLLLLLGLSFLTVFALVYVLLTRQGSFSQSPRCPSIPPRIHPWTHPSQSQLFADLTPEELTAVMSFLTKHLGPGLVDAAQARPSDNCVFSVELQLPAKAAALAHLDRGGPPPVREALAIIFFGGQPKPNVSELVVGPLPHPSYMRDVTVERHGGPLPYYRRPMQKTEFVQIWRHLKEVELPKAPTFLASVLNYNGSTLAPLHSTASGFHAGDRATWIALYHNISGLGVFLHPVGLELLLDHGALDPADWVVQQVFYLGHYYADLAQLEWEFKVGRLEVIRVPLPTPGGASSLRPRVTPDPPLPPLQFSLQGPQYNIQGNSVTSPLWTFTFGHGVFSGLRIFDIRFKGERVAYEVSVQECLTVYGADSPKTMTIRYLDSSYGLGLNSRALVRGVDCPYQATMVDIHVLVGTGSVQLLPGAVCVFEEAQGLPLRRHHNGIGGHFYGGLASSSLVVRSVSSVGNYDYIWDFMLHPTGALEARVHATGYINTAFMSGGAESLLFGNRVGERVLGAVHTHAFHFKLDLDVAGLKNWVIAEDAVFKPVAAPWNPELQLQRPQLTRQVLSREDLAAFPWGSPLPRYLYLATNQTNAWGHQRGYRIQIHSPPGVHVPLESSEERALSWGRYQLVVTQRKEAEPHSSSIYYQNDMRSPATVFADFINNETLLGEDLVAWVTASFLHIPHAEDIPNTVTVGNRVGFLLRPYNFFNEDPSIFSPGSVYFERDQDAGLCSINPVACTQQLADCVPNLPSFSYEGL</sequence>
<accession>Q812C9</accession>
<accession>A2A4J0</accession>
<accession>Q80WP3</accession>